<comment type="subunit">
    <text evidence="1">Part of the 50S ribosomal subunit. Contacts protein L32.</text>
</comment>
<comment type="similarity">
    <text evidence="1">Belongs to the bacterial ribosomal protein bL17 family.</text>
</comment>
<proteinExistence type="inferred from homology"/>
<sequence length="128" mass="14506">MAYRKLGRTSSQRKAMLRDLTTDLLINESIVTTEARAKEIRKTVEKMITLGKRGDLHARRQAAAFVRNEIASENYDEATDKYTSTTALQKLFSEIAPRYAERNGGYTRILKTEPRRGDAAPMAIIELV</sequence>
<keyword id="KW-0687">Ribonucleoprotein</keyword>
<keyword id="KW-0689">Ribosomal protein</keyword>
<dbReference type="EMBL" id="CP001015">
    <property type="protein sequence ID" value="ACF55299.1"/>
    <property type="molecule type" value="Genomic_DNA"/>
</dbReference>
<dbReference type="SMR" id="B5E6I1"/>
<dbReference type="KEGG" id="spx:SPG_0221"/>
<dbReference type="HOGENOM" id="CLU_074407_2_2_9"/>
<dbReference type="GO" id="GO:0022625">
    <property type="term" value="C:cytosolic large ribosomal subunit"/>
    <property type="evidence" value="ECO:0007669"/>
    <property type="project" value="TreeGrafter"/>
</dbReference>
<dbReference type="GO" id="GO:0003735">
    <property type="term" value="F:structural constituent of ribosome"/>
    <property type="evidence" value="ECO:0007669"/>
    <property type="project" value="InterPro"/>
</dbReference>
<dbReference type="GO" id="GO:0006412">
    <property type="term" value="P:translation"/>
    <property type="evidence" value="ECO:0007669"/>
    <property type="project" value="UniProtKB-UniRule"/>
</dbReference>
<dbReference type="FunFam" id="3.90.1030.10:FF:000002">
    <property type="entry name" value="50S ribosomal protein L17"/>
    <property type="match status" value="1"/>
</dbReference>
<dbReference type="Gene3D" id="3.90.1030.10">
    <property type="entry name" value="Ribosomal protein L17"/>
    <property type="match status" value="1"/>
</dbReference>
<dbReference type="HAMAP" id="MF_01368">
    <property type="entry name" value="Ribosomal_bL17"/>
    <property type="match status" value="1"/>
</dbReference>
<dbReference type="InterPro" id="IPR000456">
    <property type="entry name" value="Ribosomal_bL17"/>
</dbReference>
<dbReference type="InterPro" id="IPR047859">
    <property type="entry name" value="Ribosomal_bL17_CS"/>
</dbReference>
<dbReference type="InterPro" id="IPR036373">
    <property type="entry name" value="Ribosomal_bL17_sf"/>
</dbReference>
<dbReference type="NCBIfam" id="TIGR00059">
    <property type="entry name" value="L17"/>
    <property type="match status" value="1"/>
</dbReference>
<dbReference type="PANTHER" id="PTHR14413:SF16">
    <property type="entry name" value="LARGE RIBOSOMAL SUBUNIT PROTEIN BL17M"/>
    <property type="match status" value="1"/>
</dbReference>
<dbReference type="PANTHER" id="PTHR14413">
    <property type="entry name" value="RIBOSOMAL PROTEIN L17"/>
    <property type="match status" value="1"/>
</dbReference>
<dbReference type="Pfam" id="PF01196">
    <property type="entry name" value="Ribosomal_L17"/>
    <property type="match status" value="1"/>
</dbReference>
<dbReference type="SUPFAM" id="SSF64263">
    <property type="entry name" value="Prokaryotic ribosomal protein L17"/>
    <property type="match status" value="1"/>
</dbReference>
<dbReference type="PROSITE" id="PS01167">
    <property type="entry name" value="RIBOSOMAL_L17"/>
    <property type="match status" value="1"/>
</dbReference>
<protein>
    <recommendedName>
        <fullName evidence="1">Large ribosomal subunit protein bL17</fullName>
    </recommendedName>
    <alternativeName>
        <fullName evidence="2">50S ribosomal protein L17</fullName>
    </alternativeName>
</protein>
<name>RL17_STRP4</name>
<organism>
    <name type="scientific">Streptococcus pneumoniae serotype 19F (strain G54)</name>
    <dbReference type="NCBI Taxonomy" id="512566"/>
    <lineage>
        <taxon>Bacteria</taxon>
        <taxon>Bacillati</taxon>
        <taxon>Bacillota</taxon>
        <taxon>Bacilli</taxon>
        <taxon>Lactobacillales</taxon>
        <taxon>Streptococcaceae</taxon>
        <taxon>Streptococcus</taxon>
    </lineage>
</organism>
<evidence type="ECO:0000255" key="1">
    <source>
        <dbReference type="HAMAP-Rule" id="MF_01368"/>
    </source>
</evidence>
<evidence type="ECO:0000305" key="2"/>
<feature type="chain" id="PRO_1000144490" description="Large ribosomal subunit protein bL17">
    <location>
        <begin position="1"/>
        <end position="128"/>
    </location>
</feature>
<reference key="1">
    <citation type="journal article" date="2001" name="Microb. Drug Resist.">
        <title>Annotated draft genomic sequence from a Streptococcus pneumoniae type 19F clinical isolate.</title>
        <authorList>
            <person name="Dopazo J."/>
            <person name="Mendoza A."/>
            <person name="Herrero J."/>
            <person name="Caldara F."/>
            <person name="Humbert Y."/>
            <person name="Friedli L."/>
            <person name="Guerrier M."/>
            <person name="Grand-Schenk E."/>
            <person name="Gandin C."/>
            <person name="de Francesco M."/>
            <person name="Polissi A."/>
            <person name="Buell G."/>
            <person name="Feger G."/>
            <person name="Garcia E."/>
            <person name="Peitsch M."/>
            <person name="Garcia-Bustos J.F."/>
        </authorList>
    </citation>
    <scope>NUCLEOTIDE SEQUENCE [LARGE SCALE GENOMIC DNA]</scope>
    <source>
        <strain>G54</strain>
    </source>
</reference>
<reference key="2">
    <citation type="submission" date="2008-03" db="EMBL/GenBank/DDBJ databases">
        <title>Pneumococcal beta glucoside metabolism investigated by whole genome comparison.</title>
        <authorList>
            <person name="Mulas L."/>
            <person name="Trappetti C."/>
            <person name="Hakenbeck R."/>
            <person name="Iannelli F."/>
            <person name="Pozzi G."/>
            <person name="Davidsen T.M."/>
            <person name="Tettelin H."/>
            <person name="Oggioni M."/>
        </authorList>
    </citation>
    <scope>NUCLEOTIDE SEQUENCE [LARGE SCALE GENOMIC DNA]</scope>
    <source>
        <strain>G54</strain>
    </source>
</reference>
<gene>
    <name evidence="1" type="primary">rplQ</name>
    <name type="ordered locus">SPG_0221</name>
</gene>
<accession>B5E6I1</accession>